<keyword id="KW-0031">Aminopeptidase</keyword>
<keyword id="KW-0963">Cytoplasm</keyword>
<keyword id="KW-0378">Hydrolase</keyword>
<keyword id="KW-0464">Manganese</keyword>
<keyword id="KW-0479">Metal-binding</keyword>
<keyword id="KW-0645">Protease</keyword>
<evidence type="ECO:0000255" key="1">
    <source>
        <dbReference type="HAMAP-Rule" id="MF_00181"/>
    </source>
</evidence>
<feature type="chain" id="PRO_1000098349" description="Probable cytosol aminopeptidase">
    <location>
        <begin position="1"/>
        <end position="503"/>
    </location>
</feature>
<feature type="active site" evidence="1">
    <location>
        <position position="282"/>
    </location>
</feature>
<feature type="active site" evidence="1">
    <location>
        <position position="356"/>
    </location>
</feature>
<feature type="binding site" evidence="1">
    <location>
        <position position="270"/>
    </location>
    <ligand>
        <name>Mn(2+)</name>
        <dbReference type="ChEBI" id="CHEBI:29035"/>
        <label>2</label>
    </ligand>
</feature>
<feature type="binding site" evidence="1">
    <location>
        <position position="275"/>
    </location>
    <ligand>
        <name>Mn(2+)</name>
        <dbReference type="ChEBI" id="CHEBI:29035"/>
        <label>1</label>
    </ligand>
</feature>
<feature type="binding site" evidence="1">
    <location>
        <position position="275"/>
    </location>
    <ligand>
        <name>Mn(2+)</name>
        <dbReference type="ChEBI" id="CHEBI:29035"/>
        <label>2</label>
    </ligand>
</feature>
<feature type="binding site" evidence="1">
    <location>
        <position position="293"/>
    </location>
    <ligand>
        <name>Mn(2+)</name>
        <dbReference type="ChEBI" id="CHEBI:29035"/>
        <label>2</label>
    </ligand>
</feature>
<feature type="binding site" evidence="1">
    <location>
        <position position="352"/>
    </location>
    <ligand>
        <name>Mn(2+)</name>
        <dbReference type="ChEBI" id="CHEBI:29035"/>
        <label>1</label>
    </ligand>
</feature>
<feature type="binding site" evidence="1">
    <location>
        <position position="354"/>
    </location>
    <ligand>
        <name>Mn(2+)</name>
        <dbReference type="ChEBI" id="CHEBI:29035"/>
        <label>1</label>
    </ligand>
</feature>
<feature type="binding site" evidence="1">
    <location>
        <position position="354"/>
    </location>
    <ligand>
        <name>Mn(2+)</name>
        <dbReference type="ChEBI" id="CHEBI:29035"/>
        <label>2</label>
    </ligand>
</feature>
<gene>
    <name evidence="1" type="primary">pepA</name>
    <name type="ordered locus">SSPA3975</name>
</gene>
<comment type="function">
    <text evidence="1">Presumably involved in the processing and regular turnover of intracellular proteins. Catalyzes the removal of unsubstituted N-terminal amino acids from various peptides.</text>
</comment>
<comment type="catalytic activity">
    <reaction evidence="1">
        <text>Release of an N-terminal amino acid, Xaa-|-Yaa-, in which Xaa is preferably Leu, but may be other amino acids including Pro although not Arg or Lys, and Yaa may be Pro. Amino acid amides and methyl esters are also readily hydrolyzed, but rates on arylamides are exceedingly low.</text>
        <dbReference type="EC" id="3.4.11.1"/>
    </reaction>
</comment>
<comment type="catalytic activity">
    <reaction evidence="1">
        <text>Release of an N-terminal amino acid, preferentially leucine, but not glutamic or aspartic acids.</text>
        <dbReference type="EC" id="3.4.11.10"/>
    </reaction>
</comment>
<comment type="cofactor">
    <cofactor evidence="1">
        <name>Mn(2+)</name>
        <dbReference type="ChEBI" id="CHEBI:29035"/>
    </cofactor>
    <text evidence="1">Binds 2 manganese ions per subunit.</text>
</comment>
<comment type="subcellular location">
    <subcellularLocation>
        <location evidence="1">Cytoplasm</location>
    </subcellularLocation>
</comment>
<comment type="similarity">
    <text evidence="1">Belongs to the peptidase M17 family.</text>
</comment>
<reference key="1">
    <citation type="journal article" date="2009" name="BMC Genomics">
        <title>Pseudogene accumulation in the evolutionary histories of Salmonella enterica serovars Paratyphi A and Typhi.</title>
        <authorList>
            <person name="Holt K.E."/>
            <person name="Thomson N.R."/>
            <person name="Wain J."/>
            <person name="Langridge G.C."/>
            <person name="Hasan R."/>
            <person name="Bhutta Z.A."/>
            <person name="Quail M.A."/>
            <person name="Norbertczak H."/>
            <person name="Walker D."/>
            <person name="Simmonds M."/>
            <person name="White B."/>
            <person name="Bason N."/>
            <person name="Mungall K."/>
            <person name="Dougan G."/>
            <person name="Parkhill J."/>
        </authorList>
    </citation>
    <scope>NUCLEOTIDE SEQUENCE [LARGE SCALE GENOMIC DNA]</scope>
    <source>
        <strain>AKU_12601</strain>
    </source>
</reference>
<organism>
    <name type="scientific">Salmonella paratyphi A (strain AKU_12601)</name>
    <dbReference type="NCBI Taxonomy" id="554290"/>
    <lineage>
        <taxon>Bacteria</taxon>
        <taxon>Pseudomonadati</taxon>
        <taxon>Pseudomonadota</taxon>
        <taxon>Gammaproteobacteria</taxon>
        <taxon>Enterobacterales</taxon>
        <taxon>Enterobacteriaceae</taxon>
        <taxon>Salmonella</taxon>
    </lineage>
</organism>
<accession>B5BKS6</accession>
<proteinExistence type="inferred from homology"/>
<name>AMPA_SALPK</name>
<sequence>MEFSVKSGSPEKQRSACIVVGVFEPRRLSPIAEQLDKISDGYISALLRRGELEGKPGQTLLLHHVPNVLSERILLIGCGKERELDERQYKQVIQKTINTLNDTGSMEAVCFLTELHVKGRNNYWKVRQAVETAKETLYSFDQLKTNKSEPRRPLRKMVFNVPTRRELTSGERAIQHGLAIAAGIKAAKDLGNMPPNICNAAYLASQARQLADSYSKNVITRVIGEQQMRELGMNAYLAVGHGSQNESLMSVIEYKGNPSEDARPIVLVGKGLTFDSGGISIKPSEGMDEMKYDMCGAAAVYGVMRMVAELQLPINVIGVLAGCENMPGGRAYRPGDVLTTMSGQTVEVLNTDAEGRLVLCDVLTYVERFEPEAVIDVATLTGACVIALGHHITGLMSNHNPLAHELIGASEQAGDRAWRLPLGDEFQEQLESNFADMANIGGRPGGAITAGCFLSRFTRKYNWAHLDIAGTAWRSGKAKGATGRPVALLSQFLLNRAGFNGEE</sequence>
<dbReference type="EC" id="3.4.11.1" evidence="1"/>
<dbReference type="EC" id="3.4.11.10" evidence="1"/>
<dbReference type="EMBL" id="FM200053">
    <property type="protein sequence ID" value="CAR62264.1"/>
    <property type="molecule type" value="Genomic_DNA"/>
</dbReference>
<dbReference type="RefSeq" id="WP_000397158.1">
    <property type="nucleotide sequence ID" value="NC_011147.1"/>
</dbReference>
<dbReference type="SMR" id="B5BKS6"/>
<dbReference type="MEROPS" id="M17.003"/>
<dbReference type="KEGG" id="sek:SSPA3975"/>
<dbReference type="HOGENOM" id="CLU_013734_2_2_6"/>
<dbReference type="Proteomes" id="UP000001869">
    <property type="component" value="Chromosome"/>
</dbReference>
<dbReference type="GO" id="GO:0005737">
    <property type="term" value="C:cytoplasm"/>
    <property type="evidence" value="ECO:0007669"/>
    <property type="project" value="UniProtKB-SubCell"/>
</dbReference>
<dbReference type="GO" id="GO:0030145">
    <property type="term" value="F:manganese ion binding"/>
    <property type="evidence" value="ECO:0007669"/>
    <property type="project" value="UniProtKB-UniRule"/>
</dbReference>
<dbReference type="GO" id="GO:0070006">
    <property type="term" value="F:metalloaminopeptidase activity"/>
    <property type="evidence" value="ECO:0007669"/>
    <property type="project" value="InterPro"/>
</dbReference>
<dbReference type="GO" id="GO:0006508">
    <property type="term" value="P:proteolysis"/>
    <property type="evidence" value="ECO:0007669"/>
    <property type="project" value="UniProtKB-KW"/>
</dbReference>
<dbReference type="CDD" id="cd00433">
    <property type="entry name" value="Peptidase_M17"/>
    <property type="match status" value="1"/>
</dbReference>
<dbReference type="FunFam" id="3.40.220.10:FF:000001">
    <property type="entry name" value="Probable cytosol aminopeptidase"/>
    <property type="match status" value="1"/>
</dbReference>
<dbReference type="FunFam" id="3.40.630.10:FF:000004">
    <property type="entry name" value="Probable cytosol aminopeptidase"/>
    <property type="match status" value="1"/>
</dbReference>
<dbReference type="Gene3D" id="3.40.220.10">
    <property type="entry name" value="Leucine Aminopeptidase, subunit E, domain 1"/>
    <property type="match status" value="1"/>
</dbReference>
<dbReference type="Gene3D" id="3.40.630.10">
    <property type="entry name" value="Zn peptidases"/>
    <property type="match status" value="1"/>
</dbReference>
<dbReference type="HAMAP" id="MF_00181">
    <property type="entry name" value="Cytosol_peptidase_M17"/>
    <property type="match status" value="1"/>
</dbReference>
<dbReference type="InterPro" id="IPR011356">
    <property type="entry name" value="Leucine_aapep/pepB"/>
</dbReference>
<dbReference type="InterPro" id="IPR043472">
    <property type="entry name" value="Macro_dom-like"/>
</dbReference>
<dbReference type="InterPro" id="IPR000819">
    <property type="entry name" value="Peptidase_M17_C"/>
</dbReference>
<dbReference type="InterPro" id="IPR023042">
    <property type="entry name" value="Peptidase_M17_leu_NH2_pept"/>
</dbReference>
<dbReference type="InterPro" id="IPR008283">
    <property type="entry name" value="Peptidase_M17_N"/>
</dbReference>
<dbReference type="NCBIfam" id="NF002072">
    <property type="entry name" value="PRK00913.1-1"/>
    <property type="match status" value="1"/>
</dbReference>
<dbReference type="NCBIfam" id="NF002073">
    <property type="entry name" value="PRK00913.1-2"/>
    <property type="match status" value="1"/>
</dbReference>
<dbReference type="NCBIfam" id="NF002074">
    <property type="entry name" value="PRK00913.1-4"/>
    <property type="match status" value="1"/>
</dbReference>
<dbReference type="PANTHER" id="PTHR11963:SF23">
    <property type="entry name" value="CYTOSOL AMINOPEPTIDASE"/>
    <property type="match status" value="1"/>
</dbReference>
<dbReference type="PANTHER" id="PTHR11963">
    <property type="entry name" value="LEUCINE AMINOPEPTIDASE-RELATED"/>
    <property type="match status" value="1"/>
</dbReference>
<dbReference type="Pfam" id="PF00883">
    <property type="entry name" value="Peptidase_M17"/>
    <property type="match status" value="1"/>
</dbReference>
<dbReference type="Pfam" id="PF02789">
    <property type="entry name" value="Peptidase_M17_N"/>
    <property type="match status" value="1"/>
</dbReference>
<dbReference type="PRINTS" id="PR00481">
    <property type="entry name" value="LAMNOPPTDASE"/>
</dbReference>
<dbReference type="SUPFAM" id="SSF52949">
    <property type="entry name" value="Macro domain-like"/>
    <property type="match status" value="1"/>
</dbReference>
<dbReference type="SUPFAM" id="SSF53187">
    <property type="entry name" value="Zn-dependent exopeptidases"/>
    <property type="match status" value="1"/>
</dbReference>
<dbReference type="PROSITE" id="PS00631">
    <property type="entry name" value="CYTOSOL_AP"/>
    <property type="match status" value="1"/>
</dbReference>
<protein>
    <recommendedName>
        <fullName evidence="1">Probable cytosol aminopeptidase</fullName>
        <ecNumber evidence="1">3.4.11.1</ecNumber>
    </recommendedName>
    <alternativeName>
        <fullName evidence="1">Leucine aminopeptidase</fullName>
        <shortName evidence="1">LAP</shortName>
        <ecNumber evidence="1">3.4.11.10</ecNumber>
    </alternativeName>
    <alternativeName>
        <fullName evidence="1">Leucyl aminopeptidase</fullName>
    </alternativeName>
</protein>